<accession>P55546</accession>
<feature type="chain" id="PRO_0000200900" description="Uncharacterized protein y4lF">
    <location>
        <begin position="1"/>
        <end position="323"/>
    </location>
</feature>
<feature type="domain" description="TIR" evidence="1">
    <location>
        <begin position="1"/>
        <end position="142"/>
    </location>
</feature>
<geneLocation type="plasmid">
    <name>sym pNGR234a</name>
</geneLocation>
<protein>
    <recommendedName>
        <fullName>Uncharacterized protein y4lF</fullName>
    </recommendedName>
</protein>
<proteinExistence type="predicted"/>
<dbReference type="EMBL" id="U00090">
    <property type="protein sequence ID" value="AAB91758.1"/>
    <property type="molecule type" value="Genomic_DNA"/>
</dbReference>
<dbReference type="RefSeq" id="NP_443956.1">
    <property type="nucleotide sequence ID" value="NC_000914.2"/>
</dbReference>
<dbReference type="RefSeq" id="WP_010875294.1">
    <property type="nucleotide sequence ID" value="NC_000914.2"/>
</dbReference>
<dbReference type="SMR" id="P55546"/>
<dbReference type="KEGG" id="rhi:NGR_a02690"/>
<dbReference type="PATRIC" id="fig|394.7.peg.283"/>
<dbReference type="eggNOG" id="COG0846">
    <property type="taxonomic scope" value="Bacteria"/>
</dbReference>
<dbReference type="HOGENOM" id="CLU_070822_0_0_5"/>
<dbReference type="OrthoDB" id="1426235at2"/>
<dbReference type="Proteomes" id="UP000001054">
    <property type="component" value="Plasmid pNGR234a"/>
</dbReference>
<dbReference type="GO" id="GO:0007165">
    <property type="term" value="P:signal transduction"/>
    <property type="evidence" value="ECO:0007669"/>
    <property type="project" value="InterPro"/>
</dbReference>
<dbReference type="Gene3D" id="3.40.50.10140">
    <property type="entry name" value="Toll/interleukin-1 receptor homology (TIR) domain"/>
    <property type="match status" value="1"/>
</dbReference>
<dbReference type="InterPro" id="IPR000157">
    <property type="entry name" value="TIR_dom"/>
</dbReference>
<dbReference type="InterPro" id="IPR035897">
    <property type="entry name" value="Toll_tir_struct_dom_sf"/>
</dbReference>
<dbReference type="Pfam" id="PF13676">
    <property type="entry name" value="TIR_2"/>
    <property type="match status" value="1"/>
</dbReference>
<dbReference type="SMART" id="SM00255">
    <property type="entry name" value="TIR"/>
    <property type="match status" value="1"/>
</dbReference>
<dbReference type="SUPFAM" id="SSF52200">
    <property type="entry name" value="Toll/Interleukin receptor TIR domain"/>
    <property type="match status" value="1"/>
</dbReference>
<dbReference type="PROSITE" id="PS50104">
    <property type="entry name" value="TIR"/>
    <property type="match status" value="1"/>
</dbReference>
<gene>
    <name type="ordered locus">NGR_a02690</name>
    <name type="ORF">y4lF</name>
</gene>
<organism>
    <name type="scientific">Sinorhizobium fredii (strain NBRC 101917 / NGR234)</name>
    <dbReference type="NCBI Taxonomy" id="394"/>
    <lineage>
        <taxon>Bacteria</taxon>
        <taxon>Pseudomonadati</taxon>
        <taxon>Pseudomonadota</taxon>
        <taxon>Alphaproteobacteria</taxon>
        <taxon>Hyphomicrobiales</taxon>
        <taxon>Rhizobiaceae</taxon>
        <taxon>Sinorhizobium/Ensifer group</taxon>
        <taxon>Sinorhizobium</taxon>
    </lineage>
</organism>
<name>Y4LF_SINFN</name>
<sequence length="323" mass="36059">MPSVFFSYSHADEGLRDQLEKQLSMLKRQGVIETWHDRRIGAGEDIHRAIDDHINTDDIILLLVSADFIASDYCYDIEMQRAMERHHSGEAIVIPIILRACDWHHAPFGKLNAVPRDGKPITQWPDIDEAFLQVAKAVREAAGRVTRTASAPPARAAAAATPAASPAPQSLGPRSSNLRLAKSFTQRDKDQFRHDTFEYIARFFENSLKELGERNAGFEGVFRRVDANRFFATIYRDGKDVSRGTAYLGGETWGRGINYVHGETTSSNSSNESLNVEADDQTLFLTSMGMASFGRDRDQKLSQEGAAELLWAILIAPLQGTRY</sequence>
<keyword id="KW-0614">Plasmid</keyword>
<keyword id="KW-1185">Reference proteome</keyword>
<reference key="1">
    <citation type="journal article" date="1997" name="Nature">
        <title>Molecular basis of symbiosis between Rhizobium and legumes.</title>
        <authorList>
            <person name="Freiberg C.A."/>
            <person name="Fellay R."/>
            <person name="Bairoch A."/>
            <person name="Broughton W.J."/>
            <person name="Rosenthal A."/>
            <person name="Perret X."/>
        </authorList>
    </citation>
    <scope>NUCLEOTIDE SEQUENCE [LARGE SCALE GENOMIC DNA]</scope>
    <source>
        <strain>NBRC 101917 / NGR234</strain>
    </source>
</reference>
<reference key="2">
    <citation type="journal article" date="2009" name="Appl. Environ. Microbiol.">
        <title>Rhizobium sp. strain NGR234 possesses a remarkable number of secretion systems.</title>
        <authorList>
            <person name="Schmeisser C."/>
            <person name="Liesegang H."/>
            <person name="Krysciak D."/>
            <person name="Bakkou N."/>
            <person name="Le Quere A."/>
            <person name="Wollherr A."/>
            <person name="Heinemeyer I."/>
            <person name="Morgenstern B."/>
            <person name="Pommerening-Roeser A."/>
            <person name="Flores M."/>
            <person name="Palacios R."/>
            <person name="Brenner S."/>
            <person name="Gottschalk G."/>
            <person name="Schmitz R.A."/>
            <person name="Broughton W.J."/>
            <person name="Perret X."/>
            <person name="Strittmatter A.W."/>
            <person name="Streit W.R."/>
        </authorList>
    </citation>
    <scope>NUCLEOTIDE SEQUENCE [LARGE SCALE GENOMIC DNA]</scope>
    <source>
        <strain>NBRC 101917 / NGR234</strain>
    </source>
</reference>
<evidence type="ECO:0000255" key="1">
    <source>
        <dbReference type="PROSITE-ProRule" id="PRU00204"/>
    </source>
</evidence>